<accession>Q58450</accession>
<evidence type="ECO:0000255" key="1">
    <source>
        <dbReference type="HAMAP-Rule" id="MF_00039"/>
    </source>
</evidence>
<organism>
    <name type="scientific">Methanocaldococcus jannaschii (strain ATCC 43067 / DSM 2661 / JAL-1 / JCM 10045 / NBRC 100440)</name>
    <name type="common">Methanococcus jannaschii</name>
    <dbReference type="NCBI Taxonomy" id="243232"/>
    <lineage>
        <taxon>Archaea</taxon>
        <taxon>Methanobacteriati</taxon>
        <taxon>Methanobacteriota</taxon>
        <taxon>Methanomada group</taxon>
        <taxon>Methanococci</taxon>
        <taxon>Methanococcales</taxon>
        <taxon>Methanocaldococcaceae</taxon>
        <taxon>Methanocaldococcus</taxon>
    </lineage>
</organism>
<gene>
    <name type="ordered locus">MJ1050</name>
</gene>
<proteinExistence type="inferred from homology"/>
<sequence length="177" mass="20690">MRIAITGTPGVGKTTISKVLRDRLGIKVIDITEAVKKYKLYTEKDEDMDSYVIDFEKLEKFIDEIEEKEKTIILDGHVSHLLNPDYIIVLRCNPEIIKERLEKRGYKPKKVLENIQAEILDVCLCESKGKVYEIDTTNRDVENIVDEIIEAIKHKKERKGVVDWTEKYFDYLTLEIK</sequence>
<protein>
    <recommendedName>
        <fullName evidence="1">Putative adenylate kinase</fullName>
        <shortName evidence="1">AK</shortName>
        <ecNumber evidence="1">2.7.4.3</ecNumber>
    </recommendedName>
    <alternativeName>
        <fullName evidence="1">ATP-AMP transphosphorylase</fullName>
    </alternativeName>
</protein>
<name>KAD6_METJA</name>
<keyword id="KW-0067">ATP-binding</keyword>
<keyword id="KW-0418">Kinase</keyword>
<keyword id="KW-0547">Nucleotide-binding</keyword>
<keyword id="KW-1185">Reference proteome</keyword>
<keyword id="KW-0690">Ribosome biogenesis</keyword>
<keyword id="KW-0698">rRNA processing</keyword>
<keyword id="KW-0808">Transferase</keyword>
<feature type="chain" id="PRO_0000153906" description="Putative adenylate kinase">
    <location>
        <begin position="1"/>
        <end position="177"/>
    </location>
</feature>
<feature type="region of interest" description="NMP" evidence="1">
    <location>
        <begin position="30"/>
        <end position="53"/>
    </location>
</feature>
<feature type="region of interest" description="LID" evidence="1">
    <location>
        <begin position="103"/>
        <end position="113"/>
    </location>
</feature>
<feature type="binding site" evidence="1">
    <location>
        <position position="10"/>
    </location>
    <ligand>
        <name>ATP</name>
        <dbReference type="ChEBI" id="CHEBI:30616"/>
    </ligand>
</feature>
<feature type="binding site" evidence="1">
    <location>
        <position position="12"/>
    </location>
    <ligand>
        <name>ATP</name>
        <dbReference type="ChEBI" id="CHEBI:30616"/>
    </ligand>
</feature>
<feature type="binding site" evidence="1">
    <location>
        <position position="13"/>
    </location>
    <ligand>
        <name>ATP</name>
        <dbReference type="ChEBI" id="CHEBI:30616"/>
    </ligand>
</feature>
<feature type="binding site" evidence="1">
    <location>
        <position position="14"/>
    </location>
    <ligand>
        <name>ATP</name>
        <dbReference type="ChEBI" id="CHEBI:30616"/>
    </ligand>
</feature>
<feature type="binding site" evidence="1">
    <location>
        <position position="15"/>
    </location>
    <ligand>
        <name>ATP</name>
        <dbReference type="ChEBI" id="CHEBI:30616"/>
    </ligand>
</feature>
<feature type="binding site" evidence="1">
    <location>
        <position position="104"/>
    </location>
    <ligand>
        <name>ATP</name>
        <dbReference type="ChEBI" id="CHEBI:30616"/>
    </ligand>
</feature>
<reference key="1">
    <citation type="journal article" date="1996" name="Science">
        <title>Complete genome sequence of the methanogenic archaeon, Methanococcus jannaschii.</title>
        <authorList>
            <person name="Bult C.J."/>
            <person name="White O."/>
            <person name="Olsen G.J."/>
            <person name="Zhou L."/>
            <person name="Fleischmann R.D."/>
            <person name="Sutton G.G."/>
            <person name="Blake J.A."/>
            <person name="FitzGerald L.M."/>
            <person name="Clayton R.A."/>
            <person name="Gocayne J.D."/>
            <person name="Kerlavage A.R."/>
            <person name="Dougherty B.A."/>
            <person name="Tomb J.-F."/>
            <person name="Adams M.D."/>
            <person name="Reich C.I."/>
            <person name="Overbeek R."/>
            <person name="Kirkness E.F."/>
            <person name="Weinstock K.G."/>
            <person name="Merrick J.M."/>
            <person name="Glodek A."/>
            <person name="Scott J.L."/>
            <person name="Geoghagen N.S.M."/>
            <person name="Weidman J.F."/>
            <person name="Fuhrmann J.L."/>
            <person name="Nguyen D."/>
            <person name="Utterback T.R."/>
            <person name="Kelley J.M."/>
            <person name="Peterson J.D."/>
            <person name="Sadow P.W."/>
            <person name="Hanna M.C."/>
            <person name="Cotton M.D."/>
            <person name="Roberts K.M."/>
            <person name="Hurst M.A."/>
            <person name="Kaine B.P."/>
            <person name="Borodovsky M."/>
            <person name="Klenk H.-P."/>
            <person name="Fraser C.M."/>
            <person name="Smith H.O."/>
            <person name="Woese C.R."/>
            <person name="Venter J.C."/>
        </authorList>
    </citation>
    <scope>NUCLEOTIDE SEQUENCE [LARGE SCALE GENOMIC DNA]</scope>
    <source>
        <strain>ATCC 43067 / DSM 2661 / JAL-1 / JCM 10045 / NBRC 100440</strain>
    </source>
</reference>
<comment type="function">
    <text evidence="1">Broad-specificity nucleoside monophosphate (NMP) kinase that catalyzes the reversible transfer of the terminal phosphate group between nucleoside triphosphates and monophosphates. Also has ATPase activity. Involved in the late maturation steps of the 30S ribosomal particles, specifically 16S rRNA maturation. While NMP activity is not required for ribosome maturation, ATPase activity is. Associates transiently with small ribosomal subunit protein uS11. ATP hydrolysis breaks the interaction with uS11. May temporarily remove uS11 from the ribosome to enable a conformational change of the ribosomal RNA that is needed for the final maturation step of the small ribosomal subunit.</text>
</comment>
<comment type="catalytic activity">
    <reaction evidence="1">
        <text>AMP + ATP = 2 ADP</text>
        <dbReference type="Rhea" id="RHEA:12973"/>
        <dbReference type="ChEBI" id="CHEBI:30616"/>
        <dbReference type="ChEBI" id="CHEBI:456215"/>
        <dbReference type="ChEBI" id="CHEBI:456216"/>
        <dbReference type="EC" id="2.7.4.3"/>
    </reaction>
</comment>
<comment type="catalytic activity">
    <reaction evidence="1">
        <text>ATP + H2O = ADP + phosphate + H(+)</text>
        <dbReference type="Rhea" id="RHEA:13065"/>
        <dbReference type="ChEBI" id="CHEBI:15377"/>
        <dbReference type="ChEBI" id="CHEBI:15378"/>
        <dbReference type="ChEBI" id="CHEBI:30616"/>
        <dbReference type="ChEBI" id="CHEBI:43474"/>
        <dbReference type="ChEBI" id="CHEBI:456216"/>
    </reaction>
</comment>
<comment type="subunit">
    <text evidence="1">Interacts with uS11. Not a structural component of 40S pre-ribosomes, but transiently interacts with them by binding to uS11.</text>
</comment>
<comment type="similarity">
    <text evidence="1">Belongs to the adenylate kinase family. AK6 subfamily.</text>
</comment>
<dbReference type="EC" id="2.7.4.3" evidence="1"/>
<dbReference type="EMBL" id="L77117">
    <property type="protein sequence ID" value="AAB99053.1"/>
    <property type="molecule type" value="Genomic_DNA"/>
</dbReference>
<dbReference type="PIR" id="A64431">
    <property type="entry name" value="A64431"/>
</dbReference>
<dbReference type="RefSeq" id="WP_010870563.1">
    <property type="nucleotide sequence ID" value="NC_000909.1"/>
</dbReference>
<dbReference type="SMR" id="Q58450"/>
<dbReference type="FunCoup" id="Q58450">
    <property type="interactions" value="238"/>
</dbReference>
<dbReference type="STRING" id="243232.MJ_1050"/>
<dbReference type="PaxDb" id="243232-MJ_1050"/>
<dbReference type="EnsemblBacteria" id="AAB99053">
    <property type="protein sequence ID" value="AAB99053"/>
    <property type="gene ID" value="MJ_1050"/>
</dbReference>
<dbReference type="GeneID" id="1451947"/>
<dbReference type="KEGG" id="mja:MJ_1050"/>
<dbReference type="eggNOG" id="arCOG01038">
    <property type="taxonomic scope" value="Archaea"/>
</dbReference>
<dbReference type="HOGENOM" id="CLU_079096_0_1_2"/>
<dbReference type="InParanoid" id="Q58450"/>
<dbReference type="OrthoDB" id="8730at2157"/>
<dbReference type="PhylomeDB" id="Q58450"/>
<dbReference type="Proteomes" id="UP000000805">
    <property type="component" value="Chromosome"/>
</dbReference>
<dbReference type="GO" id="GO:0004017">
    <property type="term" value="F:adenylate kinase activity"/>
    <property type="evidence" value="ECO:0007669"/>
    <property type="project" value="UniProtKB-UniRule"/>
</dbReference>
<dbReference type="GO" id="GO:0005524">
    <property type="term" value="F:ATP binding"/>
    <property type="evidence" value="ECO:0007669"/>
    <property type="project" value="UniProtKB-UniRule"/>
</dbReference>
<dbReference type="GO" id="GO:0016887">
    <property type="term" value="F:ATP hydrolysis activity"/>
    <property type="evidence" value="ECO:0007669"/>
    <property type="project" value="InterPro"/>
</dbReference>
<dbReference type="GO" id="GO:0042274">
    <property type="term" value="P:ribosomal small subunit biogenesis"/>
    <property type="evidence" value="ECO:0007669"/>
    <property type="project" value="UniProtKB-UniRule"/>
</dbReference>
<dbReference type="GO" id="GO:0006364">
    <property type="term" value="P:rRNA processing"/>
    <property type="evidence" value="ECO:0007669"/>
    <property type="project" value="UniProtKB-KW"/>
</dbReference>
<dbReference type="Gene3D" id="3.40.50.300">
    <property type="entry name" value="P-loop containing nucleotide triphosphate hydrolases"/>
    <property type="match status" value="1"/>
</dbReference>
<dbReference type="HAMAP" id="MF_00039">
    <property type="entry name" value="Adenylate_kinase_AK6"/>
    <property type="match status" value="1"/>
</dbReference>
<dbReference type="InterPro" id="IPR020618">
    <property type="entry name" value="Adenyl_kinase_AK6"/>
</dbReference>
<dbReference type="InterPro" id="IPR027417">
    <property type="entry name" value="P-loop_NTPase"/>
</dbReference>
<dbReference type="NCBIfam" id="NF003012">
    <property type="entry name" value="PRK03839.1"/>
    <property type="match status" value="1"/>
</dbReference>
<dbReference type="PANTHER" id="PTHR12595:SF0">
    <property type="entry name" value="ADENYLATE KINASE ISOENZYME 6"/>
    <property type="match status" value="1"/>
</dbReference>
<dbReference type="PANTHER" id="PTHR12595">
    <property type="entry name" value="POS9-ACTIVATING FACTOR FAP7-RELATED"/>
    <property type="match status" value="1"/>
</dbReference>
<dbReference type="Pfam" id="PF13238">
    <property type="entry name" value="AAA_18"/>
    <property type="match status" value="1"/>
</dbReference>
<dbReference type="SUPFAM" id="SSF52540">
    <property type="entry name" value="P-loop containing nucleoside triphosphate hydrolases"/>
    <property type="match status" value="1"/>
</dbReference>